<comment type="function">
    <text evidence="1">Component of the DNA-dependent RNA polymerase that catalyzes the transcription of DNA into RNA using the four ribonucleoside triphosphates as substrates. Largest and catalytic component of RNA polymerase II which synthesizes mRNA precursors and many functional non-coding RNAs. Forms the polymerase active center together with the second largest subunit (By similarity).</text>
</comment>
<comment type="catalytic activity">
    <reaction>
        <text>RNA(n) + a ribonucleoside 5'-triphosphate = RNA(n+1) + diphosphate</text>
        <dbReference type="Rhea" id="RHEA:21248"/>
        <dbReference type="Rhea" id="RHEA-COMP:14527"/>
        <dbReference type="Rhea" id="RHEA-COMP:17342"/>
        <dbReference type="ChEBI" id="CHEBI:33019"/>
        <dbReference type="ChEBI" id="CHEBI:61557"/>
        <dbReference type="ChEBI" id="CHEBI:140395"/>
        <dbReference type="EC" id="2.7.7.6"/>
    </reaction>
</comment>
<comment type="similarity">
    <text evidence="2">Belongs to the RNA polymerase beta' chain family.</text>
</comment>
<comment type="sequence caution" evidence="2">
    <conflict type="frameshift">
        <sequence resource="EMBL-CDS" id="AAB33907"/>
    </conflict>
</comment>
<keyword id="KW-0240">DNA-directed RNA polymerase</keyword>
<keyword id="KW-0460">Magnesium</keyword>
<keyword id="KW-0479">Metal-binding</keyword>
<keyword id="KW-0548">Nucleotidyltransferase</keyword>
<keyword id="KW-1185">Reference proteome</keyword>
<keyword id="KW-0804">Transcription</keyword>
<keyword id="KW-0808">Transferase</keyword>
<keyword id="KW-0862">Zinc</keyword>
<sequence>MSANNNMESEIKEIESISFGMMSSEDIRQMSSFEVKTAKISSTNLLETVHDPKSGPIGSAPCETCHQNEWDCPGHFGHIELNVPIIHPLFINHVVNILKIFCWKCNEFLLTKDHLELNNILKLEKEKKFNAVLEKIKKCDRCVHCTTPRADYKLVLNDITYKTIYRTFSYQGGAVKTARDKKLNESREIVSAEMVKKIFDNIKLEYVEMLGISHPKDFCLEVFPVIPSCCRPHEVQDGNINDDDLTYQLMEIVKNNSMIGAIKLEKESMEKQYPECLKVKEILLLSNVEKQKKEIDDFLKKPIKNGLKTKKKINKEEITPLDQYLKLHDKYVKYVNNLKFRIETYCNNSQGKATHATTGRAIKGLRERLTGKEGQIRNNLLGKRCEMSARTVIGPDPTLKIDEVIVPKEIAQSLTFPDFVNKHNIDRLTKLVNSGNAIRLVKKNESGQEIKINLAAAINNHGTPLQHDDIIKRPKITNNHEEKHNYEEKHNFDTFETIVIKDPKNFVLKEGDILFRNNFQQKVVLPSKKFIKLEEGWIVHRYLQNGDILVLNRQPTLHKASMMALRVKIMDVKTFKFNLACTKPYNADFDGDEMNAHAPQSEESKAELFTLSTPKQCIMSCQSGKPNLTIVQDSLTGAYLMSKENNNDATLTNGEFNDILMVLTQNDEYNGDVVDYFLKRKEDVSNTLKKLGFSGTVLNGKGLLSLLFPNDLYINEEDLKINRGVIYDGCLTKKYLSSTESSLIKILYKEYGVETCATFLNNIQFLTNRWLMISSFSIHAGDCIKQKEVLGTVEQCLMESEKIKMTTQNPFIREQKIMQTLSNAKDVGMKIAKDALKRDNVNLHAQNNFLTTVESGSKGDHLNIAQITSLLGQQITEGQRVKPLLSNGKRTLPHYILKEENNDTEHFHDLLEEYESQGFISSSFAQGLNPKEFFFHCMAGRQGVCDTAMSTATSGYIMRRNVKLTEDIKVAYDGTVQDTRGRRFQMAYGELGYDPSKLVKVNGKPEVCNIARLVNKLNCNFEDNIK</sequence>
<gene>
    <name type="ORF">IIV6-176R</name>
</gene>
<proteinExistence type="inferred from homology"/>
<organismHost>
    <name type="scientific">Acheta domesticus</name>
    <name type="common">House cricket</name>
    <dbReference type="NCBI Taxonomy" id="6997"/>
</organismHost>
<organismHost>
    <name type="scientific">Chilo suppressalis</name>
    <name type="common">Asiatic rice borer moth</name>
    <dbReference type="NCBI Taxonomy" id="168631"/>
</organismHost>
<organismHost>
    <name type="scientific">Gryllus bimaculatus</name>
    <name type="common">Two-spotted cricket</name>
    <dbReference type="NCBI Taxonomy" id="6999"/>
</organismHost>
<organismHost>
    <name type="scientific">Gryllus campestris</name>
    <dbReference type="NCBI Taxonomy" id="58607"/>
</organismHost>
<organismHost>
    <name type="scientific">Spodoptera frugiperda</name>
    <name type="common">Fall armyworm</name>
    <dbReference type="NCBI Taxonomy" id="7108"/>
</organismHost>
<feature type="chain" id="PRO_0000377495" description="Probable DNA-directed RNA polymerase II subunit RPB1 homolog">
    <location>
        <begin position="1"/>
        <end position="1026"/>
    </location>
</feature>
<feature type="binding site" evidence="1">
    <location>
        <position position="62"/>
    </location>
    <ligand>
        <name>Zn(2+)</name>
        <dbReference type="ChEBI" id="CHEBI:29105"/>
        <label>1</label>
    </ligand>
</feature>
<feature type="binding site" evidence="1">
    <location>
        <position position="65"/>
    </location>
    <ligand>
        <name>Zn(2+)</name>
        <dbReference type="ChEBI" id="CHEBI:29105"/>
        <label>1</label>
    </ligand>
</feature>
<feature type="binding site" evidence="1">
    <location>
        <position position="72"/>
    </location>
    <ligand>
        <name>Zn(2+)</name>
        <dbReference type="ChEBI" id="CHEBI:29105"/>
        <label>1</label>
    </ligand>
</feature>
<feature type="binding site" evidence="1">
    <location>
        <position position="75"/>
    </location>
    <ligand>
        <name>Zn(2+)</name>
        <dbReference type="ChEBI" id="CHEBI:29105"/>
        <label>1</label>
    </ligand>
</feature>
<feature type="binding site" evidence="1">
    <location>
        <position position="102"/>
    </location>
    <ligand>
        <name>Zn(2+)</name>
        <dbReference type="ChEBI" id="CHEBI:29105"/>
        <label>2</label>
    </ligand>
</feature>
<feature type="binding site" evidence="1">
    <location>
        <position position="105"/>
    </location>
    <ligand>
        <name>Zn(2+)</name>
        <dbReference type="ChEBI" id="CHEBI:29105"/>
        <label>2</label>
    </ligand>
</feature>
<feature type="binding site" evidence="1">
    <location>
        <position position="142"/>
    </location>
    <ligand>
        <name>Zn(2+)</name>
        <dbReference type="ChEBI" id="CHEBI:29105"/>
        <label>2</label>
    </ligand>
</feature>
<feature type="binding site" evidence="1">
    <location>
        <position position="588"/>
    </location>
    <ligand>
        <name>Mg(2+)</name>
        <dbReference type="ChEBI" id="CHEBI:18420"/>
        <note>catalytic</note>
    </ligand>
</feature>
<feature type="binding site" evidence="1">
    <location>
        <position position="590"/>
    </location>
    <ligand>
        <name>Mg(2+)</name>
        <dbReference type="ChEBI" id="CHEBI:18420"/>
        <note>catalytic</note>
    </ligand>
</feature>
<feature type="binding site" evidence="1">
    <location>
        <position position="592"/>
    </location>
    <ligand>
        <name>Mg(2+)</name>
        <dbReference type="ChEBI" id="CHEBI:18420"/>
        <note>catalytic</note>
    </ligand>
</feature>
<feature type="sequence conflict" description="In Ref. 1 and 2; AAB33907." evidence="2" ref="1 2">
    <original>I</original>
    <variation>N</variation>
    <location>
        <position position="452"/>
    </location>
</feature>
<feature type="sequence conflict" description="In Ref. 1 and 2; AAB33907." evidence="2" ref="1 2">
    <original>LT</original>
    <variation>N</variation>
    <location>
        <begin position="651"/>
        <end position="652"/>
    </location>
</feature>
<reference key="1">
    <citation type="journal article" date="1994" name="Intervirology">
        <title>Identification of the primary structure and the coding capacity of the genome of insect iridescent virus type 6 between the genome coordinates 0.310 and 0.347 (7990 bp).</title>
        <authorList>
            <person name="Sonntag K.-C."/>
            <person name="Schnitzler P."/>
            <person name="Janssen W."/>
            <person name="Darai G."/>
        </authorList>
    </citation>
    <scope>NUCLEOTIDE SEQUENCE [GENOMIC DNA]</scope>
</reference>
<reference key="2">
    <citation type="journal article" date="1994" name="J. Gen. Virol.">
        <title>Insect iridescent virus type 6 encodes a polypeptide related to the largest subunit of eukaryotic RNA polymerase II.</title>
        <authorList>
            <person name="Schnitzler P."/>
            <person name="Sonntag K.-C."/>
            <person name="Muller M."/>
            <person name="Janssen W."/>
            <person name="Bugert J.J."/>
            <person name="Koonin E.V."/>
            <person name="Darai G."/>
        </authorList>
    </citation>
    <scope>NUCLEOTIDE SEQUENCE [GENOMIC DNA]</scope>
</reference>
<reference key="3">
    <citation type="journal article" date="2001" name="Virology">
        <title>Analysis of the first complete DNA sequence of an invertebrate iridovirus: coding strategy of the genome of Chilo iridescent virus.</title>
        <authorList>
            <person name="Jakob N.J."/>
            <person name="Mueller K."/>
            <person name="Bahr U."/>
            <person name="Darai G."/>
        </authorList>
    </citation>
    <scope>NUCLEOTIDE SEQUENCE [LARGE SCALE GENOMIC DNA]</scope>
</reference>
<reference key="4">
    <citation type="journal article" date="2007" name="Virol. J.">
        <title>Comparative genomic analysis of the family Iridoviridae: re-annotating and defining the core set of iridovirus genes.</title>
        <authorList>
            <person name="Eaton H.E."/>
            <person name="Metcalf J."/>
            <person name="Penny E."/>
            <person name="Tcherepanov V."/>
            <person name="Upton C."/>
            <person name="Brunetti C.R."/>
        </authorList>
    </citation>
    <scope>GENOME REANNOTATION</scope>
</reference>
<protein>
    <recommendedName>
        <fullName>Probable DNA-directed RNA polymerase II subunit RPB1 homolog</fullName>
        <ecNumber>2.7.7.6</ecNumber>
    </recommendedName>
</protein>
<organism>
    <name type="scientific">Invertebrate iridescent virus 6</name>
    <name type="common">IIV-6</name>
    <name type="synonym">Chilo iridescent virus</name>
    <dbReference type="NCBI Taxonomy" id="176652"/>
    <lineage>
        <taxon>Viruses</taxon>
        <taxon>Varidnaviria</taxon>
        <taxon>Bamfordvirae</taxon>
        <taxon>Nucleocytoviricota</taxon>
        <taxon>Megaviricetes</taxon>
        <taxon>Pimascovirales</taxon>
        <taxon>Iridoviridae</taxon>
        <taxon>Betairidovirinae</taxon>
        <taxon>Iridovirus</taxon>
    </lineage>
</organism>
<accession>O55766</accession>
<accession>Q89506</accession>
<name>RPB1_IIV6</name>
<evidence type="ECO:0000250" key="1"/>
<evidence type="ECO:0000305" key="2"/>
<dbReference type="EC" id="2.7.7.6"/>
<dbReference type="EMBL" id="S75674">
    <property type="protein sequence ID" value="AAB33907.1"/>
    <property type="status" value="ALT_FRAME"/>
    <property type="molecule type" value="Genomic_DNA"/>
</dbReference>
<dbReference type="EMBL" id="AF303741">
    <property type="protein sequence ID" value="AAB94477.1"/>
    <property type="molecule type" value="Genomic_DNA"/>
</dbReference>
<dbReference type="PIR" id="T03179">
    <property type="entry name" value="T03179"/>
</dbReference>
<dbReference type="RefSeq" id="NP_149639.1">
    <property type="nucleotide sequence ID" value="NC_003038.1"/>
</dbReference>
<dbReference type="SMR" id="O55766"/>
<dbReference type="KEGG" id="vg:1733004"/>
<dbReference type="Proteomes" id="UP000001359">
    <property type="component" value="Genome"/>
</dbReference>
<dbReference type="GO" id="GO:0000428">
    <property type="term" value="C:DNA-directed RNA polymerase complex"/>
    <property type="evidence" value="ECO:0007669"/>
    <property type="project" value="UniProtKB-KW"/>
</dbReference>
<dbReference type="GO" id="GO:0003677">
    <property type="term" value="F:DNA binding"/>
    <property type="evidence" value="ECO:0007669"/>
    <property type="project" value="InterPro"/>
</dbReference>
<dbReference type="GO" id="GO:0003899">
    <property type="term" value="F:DNA-directed RNA polymerase activity"/>
    <property type="evidence" value="ECO:0007669"/>
    <property type="project" value="UniProtKB-EC"/>
</dbReference>
<dbReference type="GO" id="GO:0046872">
    <property type="term" value="F:metal ion binding"/>
    <property type="evidence" value="ECO:0007669"/>
    <property type="project" value="UniProtKB-KW"/>
</dbReference>
<dbReference type="GO" id="GO:0006351">
    <property type="term" value="P:DNA-templated transcription"/>
    <property type="evidence" value="ECO:0007669"/>
    <property type="project" value="InterPro"/>
</dbReference>
<dbReference type="FunFam" id="2.40.40.20:FF:000019">
    <property type="entry name" value="DNA-directed RNA polymerase II subunit RPB1"/>
    <property type="match status" value="1"/>
</dbReference>
<dbReference type="Gene3D" id="1.10.132.30">
    <property type="match status" value="1"/>
</dbReference>
<dbReference type="Gene3D" id="2.40.40.20">
    <property type="match status" value="2"/>
</dbReference>
<dbReference type="Gene3D" id="6.10.250.2940">
    <property type="match status" value="1"/>
</dbReference>
<dbReference type="Gene3D" id="6.20.50.80">
    <property type="match status" value="1"/>
</dbReference>
<dbReference type="Gene3D" id="4.10.860.120">
    <property type="entry name" value="RNA polymerase II, clamp domain"/>
    <property type="match status" value="1"/>
</dbReference>
<dbReference type="Gene3D" id="1.10.274.100">
    <property type="entry name" value="RNA polymerase Rpb1, domain 3"/>
    <property type="match status" value="1"/>
</dbReference>
<dbReference type="InterPro" id="IPR045867">
    <property type="entry name" value="DNA-dir_RpoC_beta_prime"/>
</dbReference>
<dbReference type="InterPro" id="IPR000722">
    <property type="entry name" value="RNA_pol_asu"/>
</dbReference>
<dbReference type="InterPro" id="IPR006592">
    <property type="entry name" value="RNA_pol_N"/>
</dbReference>
<dbReference type="InterPro" id="IPR007080">
    <property type="entry name" value="RNA_pol_Rpb1_1"/>
</dbReference>
<dbReference type="InterPro" id="IPR007066">
    <property type="entry name" value="RNA_pol_Rpb1_3"/>
</dbReference>
<dbReference type="InterPro" id="IPR042102">
    <property type="entry name" value="RNA_pol_Rpb1_3_sf"/>
</dbReference>
<dbReference type="InterPro" id="IPR007083">
    <property type="entry name" value="RNA_pol_Rpb1_4"/>
</dbReference>
<dbReference type="InterPro" id="IPR007081">
    <property type="entry name" value="RNA_pol_Rpb1_5"/>
</dbReference>
<dbReference type="InterPro" id="IPR044893">
    <property type="entry name" value="RNA_pol_Rpb1_clamp_domain"/>
</dbReference>
<dbReference type="InterPro" id="IPR038120">
    <property type="entry name" value="Rpb1_funnel_sf"/>
</dbReference>
<dbReference type="PANTHER" id="PTHR19376">
    <property type="entry name" value="DNA-DIRECTED RNA POLYMERASE"/>
    <property type="match status" value="1"/>
</dbReference>
<dbReference type="PANTHER" id="PTHR19376:SF32">
    <property type="entry name" value="DNA-DIRECTED RNA POLYMERASE III SUBUNIT RPC1"/>
    <property type="match status" value="1"/>
</dbReference>
<dbReference type="Pfam" id="PF04997">
    <property type="entry name" value="RNA_pol_Rpb1_1"/>
    <property type="match status" value="1"/>
</dbReference>
<dbReference type="Pfam" id="PF00623">
    <property type="entry name" value="RNA_pol_Rpb1_2"/>
    <property type="match status" value="2"/>
</dbReference>
<dbReference type="Pfam" id="PF04983">
    <property type="entry name" value="RNA_pol_Rpb1_3"/>
    <property type="match status" value="1"/>
</dbReference>
<dbReference type="Pfam" id="PF05000">
    <property type="entry name" value="RNA_pol_Rpb1_4"/>
    <property type="match status" value="1"/>
</dbReference>
<dbReference type="Pfam" id="PF04998">
    <property type="entry name" value="RNA_pol_Rpb1_5"/>
    <property type="match status" value="1"/>
</dbReference>
<dbReference type="SMART" id="SM00663">
    <property type="entry name" value="RPOLA_N"/>
    <property type="match status" value="1"/>
</dbReference>
<dbReference type="SUPFAM" id="SSF64484">
    <property type="entry name" value="beta and beta-prime subunits of DNA dependent RNA-polymerase"/>
    <property type="match status" value="1"/>
</dbReference>